<keyword id="KW-0066">ATP synthesis</keyword>
<keyword id="KW-0139">CF(1)</keyword>
<keyword id="KW-0375">Hydrogen ion transport</keyword>
<keyword id="KW-0406">Ion transport</keyword>
<keyword id="KW-0472">Membrane</keyword>
<keyword id="KW-1185">Reference proteome</keyword>
<keyword id="KW-0793">Thylakoid</keyword>
<keyword id="KW-0813">Transport</keyword>
<feature type="chain" id="PRO_1000148613" description="ATP synthase gamma chain">
    <location>
        <begin position="1"/>
        <end position="314"/>
    </location>
</feature>
<evidence type="ECO:0000255" key="1">
    <source>
        <dbReference type="HAMAP-Rule" id="MF_00815"/>
    </source>
</evidence>
<accession>B1WUI3</accession>
<dbReference type="EMBL" id="CP000806">
    <property type="protein sequence ID" value="ACB53837.1"/>
    <property type="molecule type" value="Genomic_DNA"/>
</dbReference>
<dbReference type="RefSeq" id="WP_009543457.1">
    <property type="nucleotide sequence ID" value="NC_010546.1"/>
</dbReference>
<dbReference type="SMR" id="B1WUI3"/>
<dbReference type="STRING" id="43989.cce_4489"/>
<dbReference type="KEGG" id="cyt:cce_4489"/>
<dbReference type="eggNOG" id="COG0224">
    <property type="taxonomic scope" value="Bacteria"/>
</dbReference>
<dbReference type="HOGENOM" id="CLU_050669_0_0_3"/>
<dbReference type="OrthoDB" id="9812769at2"/>
<dbReference type="Proteomes" id="UP000001203">
    <property type="component" value="Chromosome circular"/>
</dbReference>
<dbReference type="GO" id="GO:0031676">
    <property type="term" value="C:plasma membrane-derived thylakoid membrane"/>
    <property type="evidence" value="ECO:0007669"/>
    <property type="project" value="UniProtKB-SubCell"/>
</dbReference>
<dbReference type="GO" id="GO:0045259">
    <property type="term" value="C:proton-transporting ATP synthase complex"/>
    <property type="evidence" value="ECO:0007669"/>
    <property type="project" value="UniProtKB-KW"/>
</dbReference>
<dbReference type="GO" id="GO:0005524">
    <property type="term" value="F:ATP binding"/>
    <property type="evidence" value="ECO:0007669"/>
    <property type="project" value="UniProtKB-UniRule"/>
</dbReference>
<dbReference type="GO" id="GO:0046933">
    <property type="term" value="F:proton-transporting ATP synthase activity, rotational mechanism"/>
    <property type="evidence" value="ECO:0007669"/>
    <property type="project" value="UniProtKB-UniRule"/>
</dbReference>
<dbReference type="CDD" id="cd12151">
    <property type="entry name" value="F1-ATPase_gamma"/>
    <property type="match status" value="1"/>
</dbReference>
<dbReference type="FunFam" id="3.40.1380.10:FF:000006">
    <property type="entry name" value="ATP synthase gamma chain"/>
    <property type="match status" value="1"/>
</dbReference>
<dbReference type="FunFam" id="1.10.287.80:FF:000003">
    <property type="entry name" value="ATP synthase gamma chain, chloroplastic"/>
    <property type="match status" value="1"/>
</dbReference>
<dbReference type="FunFam" id="1.10.287.80:FF:000004">
    <property type="entry name" value="ATP synthase gamma chain, chloroplastic"/>
    <property type="match status" value="1"/>
</dbReference>
<dbReference type="Gene3D" id="3.40.1380.10">
    <property type="match status" value="1"/>
</dbReference>
<dbReference type="Gene3D" id="1.10.287.80">
    <property type="entry name" value="ATP synthase, gamma subunit, helix hairpin domain"/>
    <property type="match status" value="2"/>
</dbReference>
<dbReference type="HAMAP" id="MF_00815">
    <property type="entry name" value="ATP_synth_gamma_bact"/>
    <property type="match status" value="1"/>
</dbReference>
<dbReference type="InterPro" id="IPR035968">
    <property type="entry name" value="ATP_synth_F1_ATPase_gsu"/>
</dbReference>
<dbReference type="InterPro" id="IPR000131">
    <property type="entry name" value="ATP_synth_F1_gsu"/>
</dbReference>
<dbReference type="NCBIfam" id="TIGR01146">
    <property type="entry name" value="ATPsyn_F1gamma"/>
    <property type="match status" value="1"/>
</dbReference>
<dbReference type="NCBIfam" id="NF004145">
    <property type="entry name" value="PRK05621.1-2"/>
    <property type="match status" value="1"/>
</dbReference>
<dbReference type="PANTHER" id="PTHR11693">
    <property type="entry name" value="ATP SYNTHASE GAMMA CHAIN"/>
    <property type="match status" value="1"/>
</dbReference>
<dbReference type="PANTHER" id="PTHR11693:SF41">
    <property type="entry name" value="ATP SYNTHASE GAMMA CHAIN, CHLOROPLASTIC"/>
    <property type="match status" value="1"/>
</dbReference>
<dbReference type="Pfam" id="PF00231">
    <property type="entry name" value="ATP-synt"/>
    <property type="match status" value="1"/>
</dbReference>
<dbReference type="PRINTS" id="PR00126">
    <property type="entry name" value="ATPASEGAMMA"/>
</dbReference>
<dbReference type="SUPFAM" id="SSF52943">
    <property type="entry name" value="ATP synthase (F1-ATPase), gamma subunit"/>
    <property type="match status" value="1"/>
</dbReference>
<protein>
    <recommendedName>
        <fullName evidence="1">ATP synthase gamma chain</fullName>
    </recommendedName>
    <alternativeName>
        <fullName evidence="1">ATP synthase F1 sector gamma subunit</fullName>
    </alternativeName>
    <alternativeName>
        <fullName evidence="1">F-ATPase gamma subunit</fullName>
    </alternativeName>
</protein>
<proteinExistence type="inferred from homology"/>
<sequence>MPNLKAIRDRIQSVKNTKKITEAMRLVAAAKVRRAQEQVISTRPFADALANVLFNLLNRLKFGDVSLPLLQQRDVKTVGIVVVSGDRGLCGGYNSYVIRRAEQRIKELKEQGVNYRLVTIGRKATQYFSRREAPIESKYTGLNQIPTADEAATIADELLSLFLSETVDRVELIYTRFVSLISSRPVVQTLAPLTMQGLETEDDEIFRLITREGKLQVERETVTQTMSSFPQDMIFEQDPVQILDALLPLYINNQLLRALQEAAASELAARMTAMSNASDNAGQLIGTLTLSYNKARQAAITQQLMEVVAGANAL</sequence>
<comment type="function">
    <text evidence="1">Produces ATP from ADP in the presence of a proton gradient across the membrane. The gamma chain is believed to be important in regulating ATPase activity and the flow of protons through the CF(0) complex.</text>
</comment>
<comment type="subunit">
    <text evidence="1">F-type ATPases have 2 components, CF(1) - the catalytic core - and CF(0) - the membrane proton channel. CF(1) has five subunits: alpha(3), beta(3), gamma(1), delta(1), epsilon(1). CF(0) has three main subunits: a, b and c.</text>
</comment>
<comment type="subcellular location">
    <subcellularLocation>
        <location evidence="1">Cellular thylakoid membrane</location>
        <topology evidence="1">Peripheral membrane protein</topology>
    </subcellularLocation>
</comment>
<comment type="similarity">
    <text evidence="1">Belongs to the ATPase gamma chain family.</text>
</comment>
<reference key="1">
    <citation type="journal article" date="2008" name="Proc. Natl. Acad. Sci. U.S.A.">
        <title>The genome of Cyanothece 51142, a unicellular diazotrophic cyanobacterium important in the marine nitrogen cycle.</title>
        <authorList>
            <person name="Welsh E.A."/>
            <person name="Liberton M."/>
            <person name="Stoeckel J."/>
            <person name="Loh T."/>
            <person name="Elvitigala T."/>
            <person name="Wang C."/>
            <person name="Wollam A."/>
            <person name="Fulton R.S."/>
            <person name="Clifton S.W."/>
            <person name="Jacobs J.M."/>
            <person name="Aurora R."/>
            <person name="Ghosh B.K."/>
            <person name="Sherman L.A."/>
            <person name="Smith R.D."/>
            <person name="Wilson R.K."/>
            <person name="Pakrasi H.B."/>
        </authorList>
    </citation>
    <scope>NUCLEOTIDE SEQUENCE [LARGE SCALE GENOMIC DNA]</scope>
    <source>
        <strain>ATCC 51142 / BH68</strain>
    </source>
</reference>
<name>ATPG_CROS5</name>
<organism>
    <name type="scientific">Crocosphaera subtropica (strain ATCC 51142 / BH68)</name>
    <name type="common">Cyanothece sp. (strain ATCC 51142)</name>
    <dbReference type="NCBI Taxonomy" id="43989"/>
    <lineage>
        <taxon>Bacteria</taxon>
        <taxon>Bacillati</taxon>
        <taxon>Cyanobacteriota</taxon>
        <taxon>Cyanophyceae</taxon>
        <taxon>Oscillatoriophycideae</taxon>
        <taxon>Chroococcales</taxon>
        <taxon>Aphanothecaceae</taxon>
        <taxon>Crocosphaera</taxon>
        <taxon>Crocosphaera subtropica</taxon>
    </lineage>
</organism>
<gene>
    <name evidence="1" type="primary">atpG</name>
    <name evidence="1" type="synonym">atpC</name>
    <name type="ordered locus">cce_4489</name>
</gene>